<reference key="1">
    <citation type="journal article" date="1984" name="Nucleic Acids Res.">
        <title>Complete sequence of pSC101.</title>
        <authorList>
            <person name="Bernardi A."/>
            <person name="Bernardi F."/>
        </authorList>
    </citation>
    <scope>NUCLEOTIDE SEQUENCE [GENOMIC DNA]</scope>
</reference>
<dbReference type="EMBL" id="X01654">
    <property type="protein sequence ID" value="CAA25820.1"/>
    <property type="molecule type" value="Genomic_DNA"/>
</dbReference>
<dbReference type="PIR" id="S28093">
    <property type="entry name" value="S28093"/>
</dbReference>
<dbReference type="RefSeq" id="NP_044284.1">
    <property type="nucleotide sequence ID" value="NC_002056.1"/>
</dbReference>
<dbReference type="RefSeq" id="WP_010891054.1">
    <property type="nucleotide sequence ID" value="NC_002056.1"/>
</dbReference>
<dbReference type="SMR" id="P14492"/>
<dbReference type="Gene3D" id="3.30.930.30">
    <property type="match status" value="1"/>
</dbReference>
<dbReference type="InterPro" id="IPR005053">
    <property type="entry name" value="MobA_MobL"/>
</dbReference>
<dbReference type="Pfam" id="PF03389">
    <property type="entry name" value="MobA_MobL"/>
    <property type="match status" value="1"/>
</dbReference>
<organism>
    <name type="scientific">Salmonella typhimurium</name>
    <dbReference type="NCBI Taxonomy" id="90371"/>
    <lineage>
        <taxon>Bacteria</taxon>
        <taxon>Pseudomonadati</taxon>
        <taxon>Pseudomonadota</taxon>
        <taxon>Gammaproteobacteria</taxon>
        <taxon>Enterobacterales</taxon>
        <taxon>Enterobacteriaceae</taxon>
        <taxon>Salmonella</taxon>
    </lineage>
</organism>
<protein>
    <recommendedName>
        <fullName>43 kDa relaxation protein</fullName>
    </recommendedName>
</protein>
<geneLocation type="plasmid">
    <name>pSC101</name>
</geneLocation>
<sequence length="371" mass="43087">MASYHLSVKTGGKGSASPHADYIAREGKYAREKDSDLEHKESGNMPAWAAHKPSEFWKAADTSERANGCTYREIEIALPRELKPEQRLELVRDFVQQEIGDRHAYQFAIHNPKAAIAGGEQPHAHIMFSERINDGIHRDPEQYFKRANTKEPDAVAQKRHVSGKHRPNAKNTLLPRGRRWADLQNKHLERYQHADRVDSRSLKAQGIDREPERHLGAGQVQRFDTEQLQAILERREAERQVQQSRDERDSVIDVTTSLREALSERDTLTLKQELKSEPEQESHSGRTFDFEKEPDKLNALVSDAMKDIQEEIDLQSLVNDAMAEFQGIHQEMERQRERERLAEKQRQQEKERQRLAEQIRQKPDKGWSFSR</sequence>
<keyword id="KW-0184">Conjugation</keyword>
<keyword id="KW-0499">Mobility protein</keyword>
<keyword id="KW-0614">Plasmid</keyword>
<comment type="function">
    <text>This protein is probably required for relaxation complex formation.</text>
</comment>
<comment type="similarity">
    <text evidence="2">Belongs to the MobA/MobL family.</text>
</comment>
<evidence type="ECO:0000256" key="1">
    <source>
        <dbReference type="SAM" id="MobiDB-lite"/>
    </source>
</evidence>
<evidence type="ECO:0000305" key="2"/>
<feature type="chain" id="PRO_0000210852" description="43 kDa relaxation protein">
    <location>
        <begin position="1"/>
        <end position="371"/>
    </location>
</feature>
<feature type="region of interest" description="Disordered" evidence="1">
    <location>
        <begin position="1"/>
        <end position="46"/>
    </location>
</feature>
<feature type="region of interest" description="Disordered" evidence="1">
    <location>
        <begin position="150"/>
        <end position="172"/>
    </location>
</feature>
<feature type="region of interest" description="Disordered" evidence="1">
    <location>
        <begin position="196"/>
        <end position="221"/>
    </location>
</feature>
<feature type="region of interest" description="Disordered" evidence="1">
    <location>
        <begin position="263"/>
        <end position="291"/>
    </location>
</feature>
<feature type="region of interest" description="Disordered" evidence="1">
    <location>
        <begin position="328"/>
        <end position="371"/>
    </location>
</feature>
<feature type="compositionally biased region" description="Basic and acidic residues" evidence="1">
    <location>
        <begin position="22"/>
        <end position="42"/>
    </location>
</feature>
<feature type="compositionally biased region" description="Basic residues" evidence="1">
    <location>
        <begin position="157"/>
        <end position="168"/>
    </location>
</feature>
<feature type="compositionally biased region" description="Basic and acidic residues" evidence="1">
    <location>
        <begin position="196"/>
        <end position="215"/>
    </location>
</feature>
<feature type="compositionally biased region" description="Basic and acidic residues" evidence="1">
    <location>
        <begin position="330"/>
        <end position="365"/>
    </location>
</feature>
<proteinExistence type="inferred from homology"/>
<name>RLX1_SALTM</name>
<accession>P14492</accession>